<dbReference type="EMBL" id="AB006703">
    <property type="protein sequence ID" value="BAB09058.1"/>
    <property type="status" value="ALT_SEQ"/>
    <property type="molecule type" value="Genomic_DNA"/>
</dbReference>
<dbReference type="EMBL" id="CP002688">
    <property type="protein sequence ID" value="AED95040.1"/>
    <property type="molecule type" value="Genomic_DNA"/>
</dbReference>
<dbReference type="EMBL" id="AK118016">
    <property type="protein sequence ID" value="BAC42649.1"/>
    <property type="status" value="ALT_FRAME"/>
    <property type="molecule type" value="mRNA"/>
</dbReference>
<dbReference type="RefSeq" id="NP_199211.2">
    <property type="nucleotide sequence ID" value="NM_123765.3"/>
</dbReference>
<dbReference type="SMR" id="Q8GXV7"/>
<dbReference type="BioGRID" id="19671">
    <property type="interactions" value="36"/>
</dbReference>
<dbReference type="FunCoup" id="Q8GXV7">
    <property type="interactions" value="1"/>
</dbReference>
<dbReference type="STRING" id="3702.Q8GXV7"/>
<dbReference type="TCDB" id="1.I.2.1.1">
    <property type="family name" value="the plant plasmodesmata (ppd) family"/>
</dbReference>
<dbReference type="PaxDb" id="3702-AT5G43980.1"/>
<dbReference type="ProteomicsDB" id="224379"/>
<dbReference type="EnsemblPlants" id="AT5G43980.1">
    <property type="protein sequence ID" value="AT5G43980.1"/>
    <property type="gene ID" value="AT5G43980"/>
</dbReference>
<dbReference type="GeneID" id="834421"/>
<dbReference type="Gramene" id="AT5G43980.1">
    <property type="protein sequence ID" value="AT5G43980.1"/>
    <property type="gene ID" value="AT5G43980"/>
</dbReference>
<dbReference type="KEGG" id="ath:AT5G43980"/>
<dbReference type="Araport" id="AT5G43980"/>
<dbReference type="TAIR" id="AT5G43980">
    <property type="gene designation" value="PDLP1"/>
</dbReference>
<dbReference type="eggNOG" id="ENOG502QWKZ">
    <property type="taxonomic scope" value="Eukaryota"/>
</dbReference>
<dbReference type="HOGENOM" id="CLU_000288_33_1_1"/>
<dbReference type="InParanoid" id="Q8GXV7"/>
<dbReference type="OMA" id="IFKGCAN"/>
<dbReference type="PhylomeDB" id="Q8GXV7"/>
<dbReference type="PRO" id="PR:Q8GXV7"/>
<dbReference type="Proteomes" id="UP000006548">
    <property type="component" value="Chromosome 5"/>
</dbReference>
<dbReference type="ExpressionAtlas" id="Q8GXV7">
    <property type="expression patterns" value="baseline and differential"/>
</dbReference>
<dbReference type="GO" id="GO:0009505">
    <property type="term" value="C:plant-type cell wall"/>
    <property type="evidence" value="ECO:0007005"/>
    <property type="project" value="TAIR"/>
</dbReference>
<dbReference type="GO" id="GO:0005886">
    <property type="term" value="C:plasma membrane"/>
    <property type="evidence" value="ECO:0007669"/>
    <property type="project" value="UniProtKB-SubCell"/>
</dbReference>
<dbReference type="GO" id="GO:0009506">
    <property type="term" value="C:plasmodesma"/>
    <property type="evidence" value="ECO:0000314"/>
    <property type="project" value="TAIR"/>
</dbReference>
<dbReference type="GO" id="GO:0006952">
    <property type="term" value="P:defense response"/>
    <property type="evidence" value="ECO:0007669"/>
    <property type="project" value="UniProtKB-KW"/>
</dbReference>
<dbReference type="GO" id="GO:0010497">
    <property type="term" value="P:plasmodesmata-mediated intercellular transport"/>
    <property type="evidence" value="ECO:0000316"/>
    <property type="project" value="TAIR"/>
</dbReference>
<dbReference type="GO" id="GO:0046739">
    <property type="term" value="P:transport of virus in multicellular host"/>
    <property type="evidence" value="ECO:0000316"/>
    <property type="project" value="TAIR"/>
</dbReference>
<dbReference type="CDD" id="cd23509">
    <property type="entry name" value="Gnk2-like"/>
    <property type="match status" value="2"/>
</dbReference>
<dbReference type="FunFam" id="3.30.430.20:FF:000001">
    <property type="entry name" value="cysteine-rich repeat secretory protein 3"/>
    <property type="match status" value="1"/>
</dbReference>
<dbReference type="FunFam" id="3.30.430.20:FF:000008">
    <property type="entry name" value="cysteine-rich repeat secretory protein 3"/>
    <property type="match status" value="1"/>
</dbReference>
<dbReference type="Gene3D" id="3.30.430.20">
    <property type="entry name" value="Gnk2 domain, C-X8-C-X2-C motif"/>
    <property type="match status" value="2"/>
</dbReference>
<dbReference type="InterPro" id="IPR051378">
    <property type="entry name" value="Cell2Cell_Antifungal"/>
</dbReference>
<dbReference type="InterPro" id="IPR002902">
    <property type="entry name" value="GNK2"/>
</dbReference>
<dbReference type="InterPro" id="IPR038408">
    <property type="entry name" value="GNK2_sf"/>
</dbReference>
<dbReference type="PANTHER" id="PTHR32080">
    <property type="entry name" value="ANTIFUNGAL PROTEIN GINKBILOBIN-2-LIKE"/>
    <property type="match status" value="1"/>
</dbReference>
<dbReference type="PANTHER" id="PTHR32080:SF36">
    <property type="entry name" value="PLASMODESMATA-LOCATED PROTEIN 1"/>
    <property type="match status" value="1"/>
</dbReference>
<dbReference type="Pfam" id="PF01657">
    <property type="entry name" value="Stress-antifung"/>
    <property type="match status" value="2"/>
</dbReference>
<dbReference type="PROSITE" id="PS51473">
    <property type="entry name" value="GNK2"/>
    <property type="match status" value="2"/>
</dbReference>
<accession>Q8GXV7</accession>
<accession>Q9FNC8</accession>
<sequence>MKLTYQFFIFWFFLPFFAISGDDDYKNLIFKGCANQKSPDPTGVFSQNLKNLFTSLVSQSSQSSFASVTSGTDNTTAVIGVFQCRGDLQNAQCYDCVSKIPKLVSKLCGGGRDDGNVVAARVHLAGCYIRYESSGFRQTSGTEMLFRVCGKKDSNDPGFVGKRETAFGMAENGVKTGSSGGGGGGGGFYAGQYESVYVLGQCEGSLGNSDCGECVKDGFEKAKSECGESNSGQVYLQKCFVSYSYYSHGVPNIEPLSGGEKRQHTERTIALAVGGVFVLGFVIVCLLVLRSAMKKKSNKYDAY</sequence>
<keyword id="KW-0965">Cell junction</keyword>
<keyword id="KW-1003">Cell membrane</keyword>
<keyword id="KW-1015">Disulfide bond</keyword>
<keyword id="KW-0945">Host-virus interaction</keyword>
<keyword id="KW-0472">Membrane</keyword>
<keyword id="KW-0611">Plant defense</keyword>
<keyword id="KW-1185">Reference proteome</keyword>
<keyword id="KW-0677">Repeat</keyword>
<keyword id="KW-0732">Signal</keyword>
<keyword id="KW-0812">Transmembrane</keyword>
<keyword id="KW-1133">Transmembrane helix</keyword>
<keyword id="KW-0813">Transport</keyword>
<organism>
    <name type="scientific">Arabidopsis thaliana</name>
    <name type="common">Mouse-ear cress</name>
    <dbReference type="NCBI Taxonomy" id="3702"/>
    <lineage>
        <taxon>Eukaryota</taxon>
        <taxon>Viridiplantae</taxon>
        <taxon>Streptophyta</taxon>
        <taxon>Embryophyta</taxon>
        <taxon>Tracheophyta</taxon>
        <taxon>Spermatophyta</taxon>
        <taxon>Magnoliopsida</taxon>
        <taxon>eudicotyledons</taxon>
        <taxon>Gunneridae</taxon>
        <taxon>Pentapetalae</taxon>
        <taxon>rosids</taxon>
        <taxon>malvids</taxon>
        <taxon>Brassicales</taxon>
        <taxon>Brassicaceae</taxon>
        <taxon>Camelineae</taxon>
        <taxon>Arabidopsis</taxon>
    </lineage>
</organism>
<comment type="function">
    <text evidence="3 6 7">Modulates cell-to-cell trafficking (PubMed:18215111). Required for systemic acquired resistance (SAR) which is mediated by the signaling molecules azelaic acid (AzA), glycerol-3-phosphate (G3P), and salicylic acid (SA). Required for the proper localization and stability of AZI1 which is involved in SAR (PubMed:27078071). Mediates callose deposition during downy mildew fungal infection around haustoria. Haustoria are unicellular protrusions from hyphae and function as the site of molecular exchange of nutrients and effectors between host and pathogen (PubMed:25393742).</text>
</comment>
<comment type="subunit">
    <text evidence="7">Interacts with AZI1 (PubMed:27078071). Interacts with PDLP5 (PubMed:27078071). Does not interact with DIR1 (PubMed:27078071).</text>
</comment>
<comment type="subunit">
    <text evidence="5">(Microbial infection) Interacts with Grapevine fanleaf virus (GFLV) 2B-MP (PubMed:20886105). Interacts with Cauliflower mosaic virus (CaMV) movement protein (PubMed:20886105).</text>
</comment>
<comment type="subcellular location">
    <subcellularLocation>
        <location>Cell membrane</location>
        <topology evidence="3">Single-pass type I membrane protein</topology>
    </subcellularLocation>
    <subcellularLocation>
        <location evidence="3 5 6 7">Cell junction</location>
        <location evidence="3 5 6 7">Plasmodesma</location>
    </subcellularLocation>
    <text evidence="5">Co-localizes with the Grapevine fanleaf virus 2B-MP at the base of tubules within modified plasmodesmata. Co-localizes with Cauliflower mosaic virus movement protein. Utilizes the secretory pathway for delivery to plasmodesmata.</text>
</comment>
<comment type="tissue specificity">
    <text evidence="3 4 6">Highly expressed in cell suspension. Expressed in epidermal and spongy mesophyll cells, and the cell wall interface at the base of the leaf trichome (at protein level) (PubMed:18215111, PubMed:19704520). Expressed in haustoria-containing cells (PubMed:25393742).</text>
</comment>
<comment type="induction">
    <text evidence="6">By downy mildew fungal infection.</text>
</comment>
<comment type="disruption phenotype">
    <text evidence="3 5">pdlp1 and pdlp3 double mutant shows altered protein diffusion (measured using GFP). In pdlp1, pdlp2 and pdlp3 triple mutant there is inhibition of GFLV 2BMP tubule formation. Virus cell-to-cell movement is negatively affected. There is a 22% reduction in mean surface area of infection foci by GFLV and an approximately 12 hour delay in long distance movement in comparison to wild-type plants. There is also a systemic delay in systemic Cauliflower mosaic virus (CaMV) spread. Overexpression shows a reduced-growth phenotype that correlates with transgene copy number and cell-to-cell trafficking of GFP, used to measure protein transport, is significantly impaired.</text>
</comment>
<comment type="similarity">
    <text evidence="12">Belongs to the cysteine-rich repeat secretory protein family. Plasmodesmata-located proteins (PDLD) subfamily.</text>
</comment>
<comment type="caution">
    <text evidence="12">PDLPs were initially named Cysteine-rich secretory proteins based on a classification work that failed to predict the transmembrane region at the C-terminus (PubMed:11402176). However, it was later shown that PDLPs are membrane proteins (PubMed:18215111, PubMed:20886105).</text>
</comment>
<comment type="sequence caution" evidence="12">
    <conflict type="erroneous gene model prediction">
        <sequence resource="EMBL-CDS" id="BAB09058"/>
    </conflict>
</comment>
<comment type="sequence caution" evidence="12">
    <conflict type="frameshift">
        <sequence resource="EMBL-CDS" id="BAC42649"/>
    </conflict>
</comment>
<feature type="signal peptide" evidence="1">
    <location>
        <begin position="1"/>
        <end position="21"/>
    </location>
</feature>
<feature type="chain" id="PRO_0000296172" description="Plasmodesmata-located protein 1">
    <location>
        <begin position="22"/>
        <end position="303"/>
    </location>
</feature>
<feature type="topological domain" description="Extracellular" evidence="3">
    <location>
        <begin position="22"/>
        <end position="268"/>
    </location>
</feature>
<feature type="transmembrane region" description="Helical" evidence="1">
    <location>
        <begin position="269"/>
        <end position="289"/>
    </location>
</feature>
<feature type="topological domain" description="Cytoplasmic" evidence="3">
    <location>
        <begin position="290"/>
        <end position="303"/>
    </location>
</feature>
<feature type="domain" description="Gnk2-homologous 1" evidence="2">
    <location>
        <begin position="27"/>
        <end position="136"/>
    </location>
</feature>
<feature type="domain" description="Gnk2-homologous 2" evidence="2">
    <location>
        <begin position="141"/>
        <end position="248"/>
    </location>
</feature>
<feature type="region of interest" description="Necessary and sufficient for plasmodesmal targeting" evidence="3">
    <location>
        <begin position="269"/>
        <end position="289"/>
    </location>
</feature>
<feature type="disulfide bond" evidence="2">
    <location>
        <begin position="33"/>
        <end position="108"/>
    </location>
</feature>
<feature type="disulfide bond" evidence="2">
    <location>
        <begin position="84"/>
        <end position="93"/>
    </location>
</feature>
<feature type="disulfide bond" evidence="2">
    <location>
        <begin position="96"/>
        <end position="127"/>
    </location>
</feature>
<feature type="disulfide bond" evidence="2">
    <location>
        <begin position="149"/>
        <end position="226"/>
    </location>
</feature>
<feature type="disulfide bond" evidence="2">
    <location>
        <begin position="202"/>
        <end position="211"/>
    </location>
</feature>
<feature type="disulfide bond" evidence="2">
    <location>
        <begin position="214"/>
        <end position="239"/>
    </location>
</feature>
<feature type="mutagenesis site" description="No effect on targeting to plasmodesma." evidence="3">
    <original>L</original>
    <variation>A</variation>
    <location>
        <position position="287"/>
    </location>
</feature>
<feature type="mutagenesis site" description="Retention in the endoplasmic reticulum." evidence="3">
    <original>V</original>
    <variation>A</variation>
    <location>
        <position position="288"/>
    </location>
</feature>
<feature type="mutagenesis site" description="No effect on targeting to plasmodesma." evidence="3">
    <original>L</original>
    <variation>A</variation>
    <location>
        <position position="289"/>
    </location>
</feature>
<proteinExistence type="evidence at protein level"/>
<reference key="1">
    <citation type="journal article" date="1997" name="DNA Res.">
        <title>Structural analysis of Arabidopsis thaliana chromosome 5. II. Sequence features of the regions of 1,044,062 bp covered by thirteen physically assigned P1 clones.</title>
        <authorList>
            <person name="Kotani H."/>
            <person name="Nakamura Y."/>
            <person name="Sato S."/>
            <person name="Kaneko T."/>
            <person name="Asamizu E."/>
            <person name="Miyajima N."/>
            <person name="Tabata S."/>
        </authorList>
    </citation>
    <scope>NUCLEOTIDE SEQUENCE [LARGE SCALE GENOMIC DNA]</scope>
    <source>
        <strain>cv. Columbia</strain>
    </source>
</reference>
<reference key="2">
    <citation type="journal article" date="2017" name="Plant J.">
        <title>Araport11: a complete reannotation of the Arabidopsis thaliana reference genome.</title>
        <authorList>
            <person name="Cheng C.Y."/>
            <person name="Krishnakumar V."/>
            <person name="Chan A.P."/>
            <person name="Thibaud-Nissen F."/>
            <person name="Schobel S."/>
            <person name="Town C.D."/>
        </authorList>
    </citation>
    <scope>GENOME REANNOTATION</scope>
    <source>
        <strain>cv. Columbia</strain>
    </source>
</reference>
<reference key="3">
    <citation type="journal article" date="2002" name="Science">
        <title>Functional annotation of a full-length Arabidopsis cDNA collection.</title>
        <authorList>
            <person name="Seki M."/>
            <person name="Narusaka M."/>
            <person name="Kamiya A."/>
            <person name="Ishida J."/>
            <person name="Satou M."/>
            <person name="Sakurai T."/>
            <person name="Nakajima M."/>
            <person name="Enju A."/>
            <person name="Akiyama K."/>
            <person name="Oono Y."/>
            <person name="Muramatsu M."/>
            <person name="Hayashizaki Y."/>
            <person name="Kawai J."/>
            <person name="Carninci P."/>
            <person name="Itoh M."/>
            <person name="Ishii Y."/>
            <person name="Arakawa T."/>
            <person name="Shibata K."/>
            <person name="Shinagawa A."/>
            <person name="Shinozaki K."/>
        </authorList>
    </citation>
    <scope>NUCLEOTIDE SEQUENCE [LARGE SCALE MRNA]</scope>
    <source>
        <strain>cv. Columbia</strain>
    </source>
</reference>
<reference key="4">
    <citation type="journal article" date="2001" name="Plant Physiol.">
        <title>A superfamily of proteins with novel cysteine-rich repeats.</title>
        <authorList>
            <person name="Chen Z."/>
        </authorList>
    </citation>
    <scope>GENE FAMILY ORGANIZATION</scope>
    <scope>NOMENCLATURE</scope>
    <scope>CAUTION</scope>
</reference>
<reference key="5">
    <citation type="journal article" date="2008" name="Plant Signal. Behav.">
        <title>Symplastic domains in the Arabidopsis shoot apical meristem correlate with PDLP1 expression patterns.</title>
        <authorList>
            <person name="Bayer E."/>
            <person name="Thomas C."/>
            <person name="Maule A."/>
        </authorList>
    </citation>
    <scope>TISSUE SPECIFICITY</scope>
</reference>
<reference key="6">
    <citation type="journal article" date="2008" name="PLoS Biol.">
        <title>Specific targeting of a plasmodesmal protein affecting cell-to-cell communication.</title>
        <authorList>
            <person name="Thomas C.L."/>
            <person name="Bayer E.M."/>
            <person name="Ritzenthaler C."/>
            <person name="Fernandez-Calvino L."/>
            <person name="Maule A.J."/>
        </authorList>
    </citation>
    <scope>FUNCTION</scope>
    <scope>SUBCELLULAR LOCATION</scope>
    <scope>TOPOLOGY</scope>
    <scope>TISSUE SPECIFICITY</scope>
    <scope>DISRUPTION PHENOTYPE</scope>
    <scope>MUTAGENESIS OF LEU-287; VAL-288 AND LEU-289</scope>
    <source>
        <strain>cv. Columbia</strain>
    </source>
</reference>
<reference key="7">
    <citation type="journal article" date="2010" name="PLoS Pathog.">
        <title>A family of plasmodesmal proteins with receptor-like properties for plant viral movement proteins.</title>
        <authorList>
            <person name="Amari K."/>
            <person name="Boutant E."/>
            <person name="Hofmann C."/>
            <person name="Schmitt-Keichinger C."/>
            <person name="Fernandez-Calvino L."/>
            <person name="Didier P."/>
            <person name="Lerich A."/>
            <person name="Mutterer J."/>
            <person name="Thomas C.L."/>
            <person name="Heinlein M."/>
            <person name="Mely Y."/>
            <person name="Maule A.J."/>
            <person name="Ritzenthaler C."/>
        </authorList>
    </citation>
    <scope>SUBCELLULAR LOCATION</scope>
    <scope>INTERACTION WITH VIRAL MOVEMENT PROTEINS</scope>
    <scope>DISRUPTION PHENOTYPE</scope>
    <source>
        <strain>cv. Columbia</strain>
    </source>
</reference>
<reference key="8">
    <citation type="journal article" date="2014" name="PLoS Pathog.">
        <title>The plasmodesmal protein PDLP1 localises to haustoria-associated membranes during downy mildew infection and regulates callose deposition.</title>
        <authorList>
            <person name="Caillaud M.C."/>
            <person name="Wirthmueller L."/>
            <person name="Sklenar J."/>
            <person name="Findlay K."/>
            <person name="Piquerez S.J."/>
            <person name="Jones A.M."/>
            <person name="Robatzek S."/>
            <person name="Jones J.D."/>
            <person name="Faulkner C."/>
        </authorList>
    </citation>
    <scope>FUNCTION</scope>
    <scope>INDUCTION BY FUNGAL INFECTION</scope>
    <scope>SUBCELLULAR LOCATION</scope>
    <scope>TISSUE SPECIFICITY</scope>
    <source>
        <strain>cv. Columbia</strain>
    </source>
</reference>
<reference key="9">
    <citation type="journal article" date="2016" name="Cell Host Microbe">
        <title>Plasmodesmata localizing proteins regulate transport and signaling during systemic acquired immunity in plants.</title>
        <authorList>
            <person name="Lim G.H."/>
            <person name="Shine M.B."/>
            <person name="de Lorenzo L."/>
            <person name="Yu K."/>
            <person name="Cui W."/>
            <person name="Navarre D."/>
            <person name="Hunt A.G."/>
            <person name="Lee J.Y."/>
            <person name="Kachroo A."/>
            <person name="Kachroo P."/>
        </authorList>
    </citation>
    <scope>FUNCTION</scope>
    <scope>INTERACTION WITH AZI1 AND PDLP5</scope>
    <scope>LACK OF INTERACTION WITH DIR1</scope>
    <scope>SUBCELLULAR LOCATION</scope>
</reference>
<name>PDLP1_ARATH</name>
<evidence type="ECO:0000255" key="1"/>
<evidence type="ECO:0000255" key="2">
    <source>
        <dbReference type="PROSITE-ProRule" id="PRU00806"/>
    </source>
</evidence>
<evidence type="ECO:0000269" key="3">
    <source>
    </source>
</evidence>
<evidence type="ECO:0000269" key="4">
    <source>
    </source>
</evidence>
<evidence type="ECO:0000269" key="5">
    <source>
    </source>
</evidence>
<evidence type="ECO:0000269" key="6">
    <source>
    </source>
</evidence>
<evidence type="ECO:0000269" key="7">
    <source>
    </source>
</evidence>
<evidence type="ECO:0000303" key="8">
    <source>
    </source>
</evidence>
<evidence type="ECO:0000303" key="9">
    <source>
    </source>
</evidence>
<evidence type="ECO:0000303" key="10">
    <source>
    </source>
</evidence>
<evidence type="ECO:0000303" key="11">
    <source>
    </source>
</evidence>
<evidence type="ECO:0000305" key="12"/>
<protein>
    <recommendedName>
        <fullName evidence="9 11">Plasmodesmata-located protein 1</fullName>
        <shortName evidence="10">PD-located protein 1</shortName>
    </recommendedName>
    <alternativeName>
        <fullName evidence="8">Cysteine-rich repeat secretory protein 56</fullName>
    </alternativeName>
    <alternativeName>
        <fullName evidence="11">Plasmodesmata localizing protein 1</fullName>
    </alternativeName>
    <alternativeName>
        <fullName>Plasmodesmata-located protein 1a</fullName>
        <shortName evidence="9">PDLP1a</shortName>
    </alternativeName>
</protein>
<gene>
    <name evidence="9" type="primary">PDLP1</name>
    <name evidence="8" type="synonym">CRRSP56</name>
    <name type="ordered locus">At5g43980</name>
    <name type="ORF">MRH10.9</name>
</gene>